<organism>
    <name type="scientific">Escherichia coli O6:K15:H31 (strain 536 / UPEC)</name>
    <dbReference type="NCBI Taxonomy" id="362663"/>
    <lineage>
        <taxon>Bacteria</taxon>
        <taxon>Pseudomonadati</taxon>
        <taxon>Pseudomonadota</taxon>
        <taxon>Gammaproteobacteria</taxon>
        <taxon>Enterobacterales</taxon>
        <taxon>Enterobacteriaceae</taxon>
        <taxon>Escherichia</taxon>
    </lineage>
</organism>
<reference key="1">
    <citation type="journal article" date="2006" name="Mol. Microbiol.">
        <title>Role of pathogenicity island-associated integrases in the genome plasticity of uropathogenic Escherichia coli strain 536.</title>
        <authorList>
            <person name="Hochhut B."/>
            <person name="Wilde C."/>
            <person name="Balling G."/>
            <person name="Middendorf B."/>
            <person name="Dobrindt U."/>
            <person name="Brzuszkiewicz E."/>
            <person name="Gottschalk G."/>
            <person name="Carniel E."/>
            <person name="Hacker J."/>
        </authorList>
    </citation>
    <scope>NUCLEOTIDE SEQUENCE [LARGE SCALE GENOMIC DNA]</scope>
    <source>
        <strain>536 / UPEC</strain>
    </source>
</reference>
<evidence type="ECO:0000255" key="1">
    <source>
        <dbReference type="PROSITE-ProRule" id="PRU00434"/>
    </source>
</evidence>
<evidence type="ECO:0000305" key="2"/>
<keyword id="KW-0067">ATP-binding</keyword>
<keyword id="KW-0547">Nucleotide-binding</keyword>
<keyword id="KW-0813">Transport</keyword>
<comment type="similarity">
    <text evidence="2">Belongs to the ABC transporter superfamily.</text>
</comment>
<comment type="sequence caution" evidence="2">
    <conflict type="frameshift">
        <sequence resource="EMBL-CDS" id="ABG69382"/>
    </conflict>
</comment>
<name>YCJV_ECOL5</name>
<accession>Q0TI47</accession>
<protein>
    <recommendedName>
        <fullName>Uncharacterized ABC transporter ATP-binding protein YcjV</fullName>
    </recommendedName>
</protein>
<sequence length="360" mass="40105">MAQLSLQHIQKIYDNQVHVVKDFNLEIADKEFIVFVGPSGCGKSTTLRMIAGLEEISGGDLLIDGKRMNDVPAKARNIAMVFQNYALYPHMTVYDNMAFGLKMQKIAREVIDERVNWAAQILGLREYLKRKPGALSGGQRQRVALGRAIVREAGVFLMDEPLSNLDAKLRVQMRAEISKLHQKLNTTMIYVTHDQTEAMTMATRIVIMKDGIVQQVGAPKTVYNQPANMFVAGFIGSPAMNFIRGTIDGDKFVTETLKLTIPEEKLAVLKTQESLHKPIVMGIRPEDIHPDAQEENNISAKISVAELTGAEFMLYTTVGGHELVVRAGALNDYHAGENITIHFDMTKCHFFDAETEIAIC</sequence>
<gene>
    <name type="primary">ycjV</name>
    <name type="ordered locus">ECP_1371</name>
</gene>
<dbReference type="EMBL" id="CP000247">
    <property type="protein sequence ID" value="ABG69382.1"/>
    <property type="status" value="ALT_FRAME"/>
    <property type="molecule type" value="Genomic_DNA"/>
</dbReference>
<dbReference type="SMR" id="Q0TI47"/>
<dbReference type="KEGG" id="ecp:ECP_1371"/>
<dbReference type="HOGENOM" id="CLU_000604_1_1_6"/>
<dbReference type="Proteomes" id="UP000009182">
    <property type="component" value="Chromosome"/>
</dbReference>
<dbReference type="GO" id="GO:0055052">
    <property type="term" value="C:ATP-binding cassette (ABC) transporter complex, substrate-binding subunit-containing"/>
    <property type="evidence" value="ECO:0007669"/>
    <property type="project" value="TreeGrafter"/>
</dbReference>
<dbReference type="GO" id="GO:0140359">
    <property type="term" value="F:ABC-type transporter activity"/>
    <property type="evidence" value="ECO:0007669"/>
    <property type="project" value="InterPro"/>
</dbReference>
<dbReference type="GO" id="GO:0005524">
    <property type="term" value="F:ATP binding"/>
    <property type="evidence" value="ECO:0007669"/>
    <property type="project" value="UniProtKB-KW"/>
</dbReference>
<dbReference type="GO" id="GO:0016887">
    <property type="term" value="F:ATP hydrolysis activity"/>
    <property type="evidence" value="ECO:0007669"/>
    <property type="project" value="InterPro"/>
</dbReference>
<dbReference type="GO" id="GO:0008643">
    <property type="term" value="P:carbohydrate transport"/>
    <property type="evidence" value="ECO:0007669"/>
    <property type="project" value="InterPro"/>
</dbReference>
<dbReference type="CDD" id="cd03301">
    <property type="entry name" value="ABC_MalK_N"/>
    <property type="match status" value="1"/>
</dbReference>
<dbReference type="FunFam" id="3.40.50.300:FF:000042">
    <property type="entry name" value="Maltose/maltodextrin ABC transporter, ATP-binding protein"/>
    <property type="match status" value="1"/>
</dbReference>
<dbReference type="Gene3D" id="2.40.50.100">
    <property type="match status" value="1"/>
</dbReference>
<dbReference type="Gene3D" id="2.40.50.140">
    <property type="entry name" value="Nucleic acid-binding proteins"/>
    <property type="match status" value="1"/>
</dbReference>
<dbReference type="Gene3D" id="3.40.50.300">
    <property type="entry name" value="P-loop containing nucleotide triphosphate hydrolases"/>
    <property type="match status" value="1"/>
</dbReference>
<dbReference type="InterPro" id="IPR003593">
    <property type="entry name" value="AAA+_ATPase"/>
</dbReference>
<dbReference type="InterPro" id="IPR003439">
    <property type="entry name" value="ABC_transporter-like_ATP-bd"/>
</dbReference>
<dbReference type="InterPro" id="IPR017871">
    <property type="entry name" value="ABC_transporter-like_CS"/>
</dbReference>
<dbReference type="InterPro" id="IPR015855">
    <property type="entry name" value="ABC_transpr_MalK-like"/>
</dbReference>
<dbReference type="InterPro" id="IPR047641">
    <property type="entry name" value="ABC_transpr_MalK/UgpC-like"/>
</dbReference>
<dbReference type="InterPro" id="IPR008995">
    <property type="entry name" value="Mo/tungstate-bd_C_term_dom"/>
</dbReference>
<dbReference type="InterPro" id="IPR012340">
    <property type="entry name" value="NA-bd_OB-fold"/>
</dbReference>
<dbReference type="InterPro" id="IPR040582">
    <property type="entry name" value="OB_MalK-like"/>
</dbReference>
<dbReference type="InterPro" id="IPR027417">
    <property type="entry name" value="P-loop_NTPase"/>
</dbReference>
<dbReference type="InterPro" id="IPR005116">
    <property type="entry name" value="Transp-assoc_OB_typ1"/>
</dbReference>
<dbReference type="NCBIfam" id="NF008653">
    <property type="entry name" value="PRK11650.1"/>
    <property type="match status" value="1"/>
</dbReference>
<dbReference type="PANTHER" id="PTHR43875">
    <property type="entry name" value="MALTODEXTRIN IMPORT ATP-BINDING PROTEIN MSMX"/>
    <property type="match status" value="1"/>
</dbReference>
<dbReference type="PANTHER" id="PTHR43875:SF1">
    <property type="entry name" value="OSMOPROTECTIVE COMPOUNDS UPTAKE ATP-BINDING PROTEIN GGTA"/>
    <property type="match status" value="1"/>
</dbReference>
<dbReference type="Pfam" id="PF00005">
    <property type="entry name" value="ABC_tran"/>
    <property type="match status" value="1"/>
</dbReference>
<dbReference type="Pfam" id="PF17912">
    <property type="entry name" value="OB_MalK"/>
    <property type="match status" value="1"/>
</dbReference>
<dbReference type="Pfam" id="PF03459">
    <property type="entry name" value="TOBE"/>
    <property type="match status" value="1"/>
</dbReference>
<dbReference type="SMART" id="SM00382">
    <property type="entry name" value="AAA"/>
    <property type="match status" value="1"/>
</dbReference>
<dbReference type="SUPFAM" id="SSF50331">
    <property type="entry name" value="MOP-like"/>
    <property type="match status" value="1"/>
</dbReference>
<dbReference type="SUPFAM" id="SSF52540">
    <property type="entry name" value="P-loop containing nucleoside triphosphate hydrolases"/>
    <property type="match status" value="1"/>
</dbReference>
<dbReference type="PROSITE" id="PS00211">
    <property type="entry name" value="ABC_TRANSPORTER_1"/>
    <property type="match status" value="1"/>
</dbReference>
<dbReference type="PROSITE" id="PS50893">
    <property type="entry name" value="ABC_TRANSPORTER_2"/>
    <property type="match status" value="1"/>
</dbReference>
<proteinExistence type="inferred from homology"/>
<feature type="chain" id="PRO_0000263025" description="Uncharacterized ABC transporter ATP-binding protein YcjV">
    <location>
        <begin position="1"/>
        <end position="360"/>
    </location>
</feature>
<feature type="domain" description="ABC transporter" evidence="1">
    <location>
        <begin position="4"/>
        <end position="235"/>
    </location>
</feature>
<feature type="binding site" evidence="1">
    <location>
        <begin position="37"/>
        <end position="44"/>
    </location>
    <ligand>
        <name>ATP</name>
        <dbReference type="ChEBI" id="CHEBI:30616"/>
    </ligand>
</feature>